<sequence length="1079" mass="121427">MEDEAVLDRGASFLKHVCDEEEVEGHHTIYIGVHVPKSYRRRRRHKRKTGHKEKREKERISENYSDKSDVENADESSSSILKPLISPAAERIRFILGEEDDSPAPPQLFTELDELLAVDGQEMEWKETARWIKFEEKVEQGGERWSKPHVATLSLHSLFELRTCMEKGSIMLDREATSLPQLVEMIVDHQIETGLLKPDLKDKVTYTLLRKHRHQTKKSNLRSLADIGKTVSSASRMFTSPDNGSPAMTHRNLTSSSLNDISDKPEKDQLKNKFMKKLPRDAEASNVLVGEVDFLDTPFIAFVRLQQAVMLGALTEVPVPTRFLFILLGPKGKAKSYHEIGRAIATLMSDEVFHDIAYKAKDRHDLIAGIDEFLDEVIVLPPGEWDPAIRIEPPKSLPSSDKRKNMYSGGENVQMNGDTPHDGGHGGGGHADCEELQRTGRFCGGLIKDLKRKAPFFASDFYDALNIQSLSAILFIYLATVTNAITFGGLLGDATDNMQGVLESFLGTAVSGAIFCLFAGQPLTILSSTGPVLVFERLLFNFSKDHNFDYLEFRLWIGLWSAFLCLILVATDASFLVQYFTRFTEEGFSSLISFIFIYDAFKKMIKLADYYPINSDFKVGYNTFFSCACVPPDPVNISIANDTTPAPQELSAVSSTDMHQNATFDWAFLSKKECLRYGGKLVGNNCNFVPDVTLMSFILFLGTYTSSMALKKFKTSRYFPTTARKLISDFAIILSILIFCVIDALVGVDTPKLIVPSEFKPTSPNRGWFVPPFGGNPWWVYLAAAIPALLVTILIFMDQQITAVIVNRKEHKLKKGAGYHLDLFWVAILMVVCSFMALPWYVAATVISIAHIDSLKMETETSAPGEQPKFLGVREQRVTGTLVFILTGLSVFMAPILKFIPMPVLYGVFLYMGVASLNGVQFMDRLKLLLMPLKHQPDFIYLRHVPLRRVHLFTFLQVLCLALLWILKSTVAAIIFPVMILALVAVRKGMDYLFSQHDLSFLDDVIPEKDKKKKEDEKKKKKKKGSLDSDNDDSDCPYSEKVPSIKIPMDIMEQQPFLSESKPSDREKSSTFLERHTSC</sequence>
<keyword id="KW-0025">Alternative splicing</keyword>
<keyword id="KW-1003">Cell membrane</keyword>
<keyword id="KW-0325">Glycoprotein</keyword>
<keyword id="KW-0406">Ion transport</keyword>
<keyword id="KW-0472">Membrane</keyword>
<keyword id="KW-0597">Phosphoprotein</keyword>
<keyword id="KW-1185">Reference proteome</keyword>
<keyword id="KW-0915">Sodium</keyword>
<keyword id="KW-0739">Sodium transport</keyword>
<keyword id="KW-0769">Symport</keyword>
<keyword id="KW-0812">Transmembrane</keyword>
<keyword id="KW-1133">Transmembrane helix</keyword>
<keyword id="KW-0813">Transport</keyword>
<reference key="1">
    <citation type="journal article" date="1999" name="Gastroenterology">
        <title>Na+/HCO3- cotransport and expression of NBC1 and NBC2 in rabbit gastric parietal and mucous cells.</title>
        <authorList>
            <person name="Rossmann H."/>
            <person name="Bachmann O."/>
            <person name="Vieillard-Baron D."/>
            <person name="Gregor M."/>
            <person name="Seidler U."/>
        </authorList>
    </citation>
    <scope>NUCLEOTIDE SEQUENCE [MRNA] (ISOFORM 1)</scope>
    <scope>TISSUE SPECIFICITY</scope>
    <scope>FUNCTION</scope>
    <scope>TRANSPORTER ACTIVITY</scope>
    <source>
        <strain>New Zealand white</strain>
        <tissue>Duodenal mucosa</tissue>
    </source>
</reference>
<reference key="2">
    <citation type="journal article" date="2013" name="Am. J. Physiol.">
        <title>Substrate specificity of the electrogenic sodium/bicarbonate cotransporter NBCe1-A (SLC4A4, variant A) from humans and rabbits.</title>
        <authorList>
            <person name="Lee S.K."/>
            <person name="Boron W.F."/>
            <person name="Parker M.D."/>
        </authorList>
    </citation>
    <scope>NUCLEOTIDE SEQUENCE [MRNA] (ISOFORM 2)</scope>
    <scope>FUNCTION</scope>
    <scope>TRANSPORTER ACTIVITY</scope>
    <scope>SUBCELLULAR LOCATION</scope>
</reference>
<reference key="3">
    <citation type="submission" date="1999-01" db="EMBL/GenBank/DDBJ databases">
        <title>Rabbit cornea endothelium sodium bicarbonate cotransporter (NBC1).</title>
        <authorList>
            <person name="Rae J.L."/>
        </authorList>
    </citation>
    <scope>NUCLEOTIDE SEQUENCE [MRNA] (ISOFORM 2)</scope>
    <source>
        <strain>New Zealand white</strain>
        <tissue>Corneal endothelium</tissue>
    </source>
</reference>
<reference key="4">
    <citation type="journal article" date="2003" name="Am. J. Physiol.">
        <title>Role of glycosylation in the renal electrogenic Na+-HCO3-cotransporter (NBCe1).</title>
        <authorList>
            <person name="Choi I."/>
            <person name="Hu L."/>
            <person name="Rojas J.D."/>
            <person name="Schmitt B.M."/>
            <person name="Boron W.F."/>
        </authorList>
    </citation>
    <scope>GLYCOSYLATION</scope>
</reference>
<dbReference type="EMBL" id="AF149418">
    <property type="protein sequence ID" value="AAD38154.1"/>
    <property type="molecule type" value="mRNA"/>
</dbReference>
<dbReference type="EMBL" id="JX426114">
    <property type="protein sequence ID" value="AFS49951.1"/>
    <property type="molecule type" value="mRNA"/>
</dbReference>
<dbReference type="EMBL" id="AF119816">
    <property type="protein sequence ID" value="AAD18037.1"/>
    <property type="molecule type" value="mRNA"/>
</dbReference>
<dbReference type="RefSeq" id="NP_001075529.1">
    <molecule id="Q9XSZ4-1"/>
    <property type="nucleotide sequence ID" value="NM_001082060.1"/>
</dbReference>
<dbReference type="SMR" id="Q9XSZ4"/>
<dbReference type="FunCoup" id="Q9XSZ4">
    <property type="interactions" value="87"/>
</dbReference>
<dbReference type="STRING" id="9986.ENSOCUP00000047986"/>
<dbReference type="GlyCosmos" id="Q9XSZ4">
    <property type="glycosylation" value="2 sites, No reported glycans"/>
</dbReference>
<dbReference type="PaxDb" id="9986-ENSOCUP00000005624"/>
<dbReference type="GeneID" id="100008727"/>
<dbReference type="KEGG" id="ocu:100008727"/>
<dbReference type="CTD" id="8671"/>
<dbReference type="eggNOG" id="KOG1172">
    <property type="taxonomic scope" value="Eukaryota"/>
</dbReference>
<dbReference type="InParanoid" id="Q9XSZ4"/>
<dbReference type="OrthoDB" id="1735926at2759"/>
<dbReference type="Proteomes" id="UP000001811">
    <property type="component" value="Unplaced"/>
</dbReference>
<dbReference type="GO" id="GO:0016323">
    <property type="term" value="C:basolateral plasma membrane"/>
    <property type="evidence" value="ECO:0000250"/>
    <property type="project" value="UniProtKB"/>
</dbReference>
<dbReference type="GO" id="GO:0005886">
    <property type="term" value="C:plasma membrane"/>
    <property type="evidence" value="ECO:0000314"/>
    <property type="project" value="UniProtKB"/>
</dbReference>
<dbReference type="GO" id="GO:0008509">
    <property type="term" value="F:monoatomic anion transmembrane transporter activity"/>
    <property type="evidence" value="ECO:0007669"/>
    <property type="project" value="InterPro"/>
</dbReference>
<dbReference type="GO" id="GO:0008510">
    <property type="term" value="F:sodium:bicarbonate symporter activity"/>
    <property type="evidence" value="ECO:0000314"/>
    <property type="project" value="UniProtKB"/>
</dbReference>
<dbReference type="GO" id="GO:0005452">
    <property type="term" value="F:solute:inorganic anion antiporter activity"/>
    <property type="evidence" value="ECO:0007669"/>
    <property type="project" value="InterPro"/>
</dbReference>
<dbReference type="GO" id="GO:0051453">
    <property type="term" value="P:regulation of intracellular pH"/>
    <property type="evidence" value="ECO:0007669"/>
    <property type="project" value="TreeGrafter"/>
</dbReference>
<dbReference type="GO" id="GO:0006814">
    <property type="term" value="P:sodium ion transport"/>
    <property type="evidence" value="ECO:0000250"/>
    <property type="project" value="UniProtKB"/>
</dbReference>
<dbReference type="FunFam" id="1.10.287.570:FF:000001">
    <property type="entry name" value="Anion exchange protein"/>
    <property type="match status" value="1"/>
</dbReference>
<dbReference type="FunFam" id="3.40.930.10:FF:000002">
    <property type="entry name" value="Anion exchange protein"/>
    <property type="match status" value="1"/>
</dbReference>
<dbReference type="Gene3D" id="1.10.287.570">
    <property type="entry name" value="Helical hairpin bin"/>
    <property type="match status" value="1"/>
</dbReference>
<dbReference type="Gene3D" id="3.40.930.10">
    <property type="entry name" value="Mannitol-specific EII, Chain A"/>
    <property type="match status" value="1"/>
</dbReference>
<dbReference type="InterPro" id="IPR013769">
    <property type="entry name" value="Band3_cytoplasmic_dom"/>
</dbReference>
<dbReference type="InterPro" id="IPR011531">
    <property type="entry name" value="HCO3_transpt-like_TM_dom"/>
</dbReference>
<dbReference type="InterPro" id="IPR003020">
    <property type="entry name" value="HCO3_transpt_euk"/>
</dbReference>
<dbReference type="InterPro" id="IPR003024">
    <property type="entry name" value="Na/HCO3_transpt"/>
</dbReference>
<dbReference type="InterPro" id="IPR016152">
    <property type="entry name" value="PTrfase/Anion_transptr"/>
</dbReference>
<dbReference type="NCBIfam" id="TIGR00834">
    <property type="entry name" value="ae"/>
    <property type="match status" value="1"/>
</dbReference>
<dbReference type="PANTHER" id="PTHR11453">
    <property type="entry name" value="ANION EXCHANGE PROTEIN"/>
    <property type="match status" value="1"/>
</dbReference>
<dbReference type="PANTHER" id="PTHR11453:SF10">
    <property type="entry name" value="ELECTROGENIC SODIUM BICARBONATE COTRANSPORTER 1"/>
    <property type="match status" value="1"/>
</dbReference>
<dbReference type="Pfam" id="PF07565">
    <property type="entry name" value="Band_3_cyto"/>
    <property type="match status" value="1"/>
</dbReference>
<dbReference type="Pfam" id="PF00955">
    <property type="entry name" value="HCO3_cotransp"/>
    <property type="match status" value="1"/>
</dbReference>
<dbReference type="PRINTS" id="PR01231">
    <property type="entry name" value="HCO3TRNSPORT"/>
</dbReference>
<dbReference type="PRINTS" id="PR01232">
    <property type="entry name" value="NAHCO3TRSPRT"/>
</dbReference>
<dbReference type="SUPFAM" id="SSF55804">
    <property type="entry name" value="Phoshotransferase/anion transport protein"/>
    <property type="match status" value="1"/>
</dbReference>
<organism>
    <name type="scientific">Oryctolagus cuniculus</name>
    <name type="common">Rabbit</name>
    <dbReference type="NCBI Taxonomy" id="9986"/>
    <lineage>
        <taxon>Eukaryota</taxon>
        <taxon>Metazoa</taxon>
        <taxon>Chordata</taxon>
        <taxon>Craniata</taxon>
        <taxon>Vertebrata</taxon>
        <taxon>Euteleostomi</taxon>
        <taxon>Mammalia</taxon>
        <taxon>Eutheria</taxon>
        <taxon>Euarchontoglires</taxon>
        <taxon>Glires</taxon>
        <taxon>Lagomorpha</taxon>
        <taxon>Leporidae</taxon>
        <taxon>Oryctolagus</taxon>
    </lineage>
</organism>
<gene>
    <name type="primary">SLC4A4</name>
    <name type="synonym">NBC1</name>
    <name type="synonym">NBCE1</name>
</gene>
<name>S4A4_RABIT</name>
<feature type="chain" id="PRO_0000079230" description="Electrogenic sodium bicarbonate cotransporter 1">
    <location>
        <begin position="1"/>
        <end position="1079"/>
    </location>
</feature>
<feature type="topological domain" description="Cytoplasmic" evidence="5">
    <location>
        <begin position="1"/>
        <end position="466"/>
    </location>
</feature>
<feature type="transmembrane region" description="Helical; Name=1" evidence="5">
    <location>
        <begin position="467"/>
        <end position="491"/>
    </location>
</feature>
<feature type="topological domain" description="Extracellular" evidence="5">
    <location>
        <begin position="492"/>
        <end position="501"/>
    </location>
</feature>
<feature type="transmembrane region" description="Helical; Name=2" evidence="5">
    <location>
        <begin position="502"/>
        <end position="520"/>
    </location>
</feature>
<feature type="topological domain" description="Cytoplasmic" evidence="5">
    <location>
        <position position="521"/>
    </location>
</feature>
<feature type="transmembrane region" description="Discontinuously helical; Name=3" evidence="5">
    <location>
        <begin position="522"/>
        <end position="542"/>
    </location>
</feature>
<feature type="topological domain" description="Extracellular" evidence="5">
    <location>
        <begin position="543"/>
        <end position="550"/>
    </location>
</feature>
<feature type="transmembrane region" description="Helical; Name=4" evidence="5">
    <location>
        <begin position="551"/>
        <end position="571"/>
    </location>
</feature>
<feature type="topological domain" description="Cytoplasmic" evidence="5">
    <location>
        <begin position="572"/>
        <end position="585"/>
    </location>
</feature>
<feature type="transmembrane region" description="Helical; Name=5" evidence="5">
    <location>
        <begin position="586"/>
        <end position="609"/>
    </location>
</feature>
<feature type="topological domain" description="Extracellular" evidence="5">
    <location>
        <begin position="610"/>
        <end position="692"/>
    </location>
</feature>
<feature type="transmembrane region" description="Helical; Name=6" evidence="5">
    <location>
        <begin position="693"/>
        <end position="710"/>
    </location>
</feature>
<feature type="topological domain" description="Cytoplasmic" evidence="5">
    <location>
        <begin position="711"/>
        <end position="725"/>
    </location>
</feature>
<feature type="transmembrane region" description="Helical; Name=7" evidence="5">
    <location>
        <begin position="726"/>
        <end position="745"/>
    </location>
</feature>
<feature type="topological domain" description="Extracellular" evidence="5">
    <location>
        <begin position="746"/>
        <end position="779"/>
    </location>
</feature>
<feature type="transmembrane region" description="Helical; Name=8" evidence="5">
    <location>
        <begin position="780"/>
        <end position="807"/>
    </location>
</feature>
<feature type="topological domain" description="Cytoplasmic" evidence="5">
    <location>
        <begin position="808"/>
        <end position="819"/>
    </location>
</feature>
<feature type="transmembrane region" description="Helical; Name=9" evidence="5">
    <location>
        <begin position="820"/>
        <end position="836"/>
    </location>
</feature>
<feature type="topological domain" description="Extracellular" evidence="5">
    <location>
        <position position="837"/>
    </location>
</feature>
<feature type="transmembrane region" description="Discontinuously helical; Name=10" evidence="5">
    <location>
        <begin position="838"/>
        <end position="855"/>
    </location>
</feature>
<feature type="topological domain" description="Cytoplasmic" evidence="5">
    <location>
        <begin position="856"/>
        <end position="877"/>
    </location>
</feature>
<feature type="transmembrane region" description="Helical; Name=11" evidence="5">
    <location>
        <begin position="878"/>
        <end position="894"/>
    </location>
</feature>
<feature type="topological domain" description="Extracellular" evidence="5">
    <location>
        <begin position="895"/>
        <end position="901"/>
    </location>
</feature>
<feature type="transmembrane region" description="Helical; Name=12" evidence="5">
    <location>
        <begin position="902"/>
        <end position="918"/>
    </location>
</feature>
<feature type="topological domain" description="Cytoplasmic" evidence="5">
    <location>
        <begin position="919"/>
        <end position="960"/>
    </location>
</feature>
<feature type="intramembrane region" description="Discontinuously helical" evidence="5">
    <location>
        <begin position="961"/>
        <end position="986"/>
    </location>
</feature>
<feature type="topological domain" description="Cytoplasmic" evidence="5">
    <location>
        <begin position="987"/>
        <end position="1079"/>
    </location>
</feature>
<feature type="region of interest" description="Required for interaction with AHCYL1" evidence="5">
    <location>
        <begin position="1"/>
        <end position="62"/>
    </location>
</feature>
<feature type="region of interest" description="Disordered" evidence="7">
    <location>
        <begin position="39"/>
        <end position="78"/>
    </location>
</feature>
<feature type="region of interest" description="Disordered" evidence="7">
    <location>
        <begin position="237"/>
        <end position="265"/>
    </location>
</feature>
<feature type="region of interest" description="Interaction with CA4" evidence="1">
    <location>
        <begin position="748"/>
        <end position="779"/>
    </location>
</feature>
<feature type="region of interest" description="CA2-binding" evidence="1">
    <location>
        <begin position="1002"/>
        <end position="1004"/>
    </location>
</feature>
<feature type="region of interest" description="Disordered" evidence="7">
    <location>
        <begin position="1012"/>
        <end position="1079"/>
    </location>
</feature>
<feature type="region of interest" description="CA2-binding" evidence="1">
    <location>
        <begin position="1030"/>
        <end position="1033"/>
    </location>
</feature>
<feature type="region of interest" description="Required for basolateral targeting" evidence="1">
    <location>
        <begin position="1057"/>
        <end position="1059"/>
    </location>
</feature>
<feature type="compositionally biased region" description="Basic residues" evidence="7">
    <location>
        <begin position="39"/>
        <end position="52"/>
    </location>
</feature>
<feature type="compositionally biased region" description="Basic and acidic residues" evidence="7">
    <location>
        <begin position="53"/>
        <end position="70"/>
    </location>
</feature>
<feature type="compositionally biased region" description="Polar residues" evidence="7">
    <location>
        <begin position="251"/>
        <end position="260"/>
    </location>
</feature>
<feature type="compositionally biased region" description="Basic and acidic residues" evidence="7">
    <location>
        <begin position="1062"/>
        <end position="1079"/>
    </location>
</feature>
<feature type="modified residue" description="Phosphotyrosine" evidence="2">
    <location>
        <position position="30"/>
    </location>
</feature>
<feature type="modified residue" description="Phosphothreonine; by PKA" evidence="5">
    <location>
        <position position="49"/>
    </location>
</feature>
<feature type="modified residue" description="Phosphoserine" evidence="2">
    <location>
        <position position="61"/>
    </location>
</feature>
<feature type="modified residue" description="Phosphoserine" evidence="2">
    <location>
        <position position="65"/>
    </location>
</feature>
<feature type="modified residue" description="Phosphoserine" evidence="2">
    <location>
        <position position="68"/>
    </location>
</feature>
<feature type="modified residue" description="Phosphoserine" evidence="2">
    <location>
        <position position="223"/>
    </location>
</feature>
<feature type="modified residue" description="Phosphoserine" evidence="2">
    <location>
        <position position="232"/>
    </location>
</feature>
<feature type="modified residue" description="Phosphoserine" evidence="2">
    <location>
        <position position="233"/>
    </location>
</feature>
<feature type="modified residue" description="Phosphoserine" evidence="2">
    <location>
        <position position="245"/>
    </location>
</feature>
<feature type="modified residue" description="Phosphothreonine" evidence="4">
    <location>
        <position position="249"/>
    </location>
</feature>
<feature type="modified residue" description="Phosphothreonine" evidence="5">
    <location>
        <position position="254"/>
    </location>
</feature>
<feature type="modified residue" description="Phosphoserine" evidence="2">
    <location>
        <position position="256"/>
    </location>
</feature>
<feature type="modified residue" description="Phosphoserine" evidence="5">
    <location>
        <position position="257"/>
    </location>
</feature>
<feature type="modified residue" description="Phosphoserine" evidence="2">
    <location>
        <position position="262"/>
    </location>
</feature>
<feature type="modified residue" description="Phosphoserine; by PKA" evidence="5">
    <location>
        <position position="1026"/>
    </location>
</feature>
<feature type="modified residue" description="Phosphoserine" evidence="2">
    <location>
        <position position="1029"/>
    </location>
</feature>
<feature type="modified residue" description="Phosphoserine" evidence="5">
    <location>
        <position position="1034"/>
    </location>
</feature>
<feature type="modified residue" description="Phosphoserine" evidence="2">
    <location>
        <position position="1044"/>
    </location>
</feature>
<feature type="modified residue" description="Phosphoserine" evidence="4">
    <location>
        <position position="1069"/>
    </location>
</feature>
<feature type="splice variant" id="VSP_016715" description="In isoform 2." evidence="11 12">
    <location>
        <begin position="1"/>
        <end position="44"/>
    </location>
</feature>
<feature type="splice variant" id="VSP_016716" description="In isoform 2." evidence="11 12">
    <original>HKRKTGHKEKREKERISENYSDKSDVENADESSSSILKPLI</original>
    <variation>MSTENVEGKPSNLGERGRARSYTFLRVVQPMFNLSIFTSAV</variation>
    <location>
        <begin position="45"/>
        <end position="85"/>
    </location>
</feature>
<feature type="sequence conflict" description="In Ref. 2." evidence="13" ref="2">
    <original>S</original>
    <variation>N</variation>
    <location sequence="Q9XSZ4-2">
        <position position="11"/>
    </location>
</feature>
<feature type="sequence conflict" description="In Ref. 2." evidence="13" ref="2">
    <original>T</original>
    <variation>A</variation>
    <location sequence="Q9XSZ4-2">
        <position position="600"/>
    </location>
</feature>
<evidence type="ECO:0000250" key="1"/>
<evidence type="ECO:0000250" key="2">
    <source>
        <dbReference type="UniProtKB" id="O88343"/>
    </source>
</evidence>
<evidence type="ECO:0000250" key="3">
    <source>
        <dbReference type="UniProtKB" id="Q9GL77"/>
    </source>
</evidence>
<evidence type="ECO:0000250" key="4">
    <source>
        <dbReference type="UniProtKB" id="Q9JI66"/>
    </source>
</evidence>
<evidence type="ECO:0000250" key="5">
    <source>
        <dbReference type="UniProtKB" id="Q9Y6R1"/>
    </source>
</evidence>
<evidence type="ECO:0000255" key="6"/>
<evidence type="ECO:0000256" key="7">
    <source>
        <dbReference type="SAM" id="MobiDB-lite"/>
    </source>
</evidence>
<evidence type="ECO:0000269" key="8">
    <source>
    </source>
</evidence>
<evidence type="ECO:0000269" key="9">
    <source>
    </source>
</evidence>
<evidence type="ECO:0000269" key="10">
    <source>
    </source>
</evidence>
<evidence type="ECO:0000303" key="11">
    <source>
    </source>
</evidence>
<evidence type="ECO:0000303" key="12">
    <source ref="3"/>
</evidence>
<evidence type="ECO:0000305" key="13"/>
<proteinExistence type="evidence at protein level"/>
<accession>Q9XSZ4</accession>
<accession>J9Z4K3</accession>
<accession>O97915</accession>
<comment type="function">
    <text evidence="8 10">Electrogenic sodium/bicarbonate cotransporter with a Na(+):HCO3(-) stoichiometry varying from 1:2 to 1:3. May regulate bicarbonate influx/efflux at the basolateral membrane of cells and regulate intracellular pH.</text>
</comment>
<comment type="catalytic activity">
    <reaction evidence="8">
        <text>2 hydrogencarbonate(out) + Na(+)(out) = 2 hydrogencarbonate(in) + Na(+)(in)</text>
        <dbReference type="Rhea" id="RHEA:72215"/>
        <dbReference type="ChEBI" id="CHEBI:17544"/>
        <dbReference type="ChEBI" id="CHEBI:29101"/>
    </reaction>
</comment>
<comment type="catalytic activity">
    <reaction evidence="8">
        <text>3 hydrogencarbonate(out) + Na(+)(out) = 3 hydrogencarbonate(in) + Na(+)(in)</text>
        <dbReference type="Rhea" id="RHEA:72219"/>
        <dbReference type="ChEBI" id="CHEBI:17544"/>
        <dbReference type="ChEBI" id="CHEBI:29101"/>
    </reaction>
</comment>
<comment type="catalytic activity">
    <molecule>Isoform 2</molecule>
    <reaction evidence="10">
        <text>2 hydrogencarbonate(out) + Na(+)(out) = 2 hydrogencarbonate(in) + Na(+)(in)</text>
        <dbReference type="Rhea" id="RHEA:72215"/>
        <dbReference type="ChEBI" id="CHEBI:17544"/>
        <dbReference type="ChEBI" id="CHEBI:29101"/>
    </reaction>
</comment>
<comment type="catalytic activity">
    <molecule>Isoform 2</molecule>
    <reaction evidence="10">
        <text>3 hydrogencarbonate(out) + Na(+)(out) = 3 hydrogencarbonate(in) + Na(+)(in)</text>
        <dbReference type="Rhea" id="RHEA:72219"/>
        <dbReference type="ChEBI" id="CHEBI:17544"/>
        <dbReference type="ChEBI" id="CHEBI:29101"/>
    </reaction>
</comment>
<comment type="subunit">
    <text evidence="2 3 5">Homodimer. Interacts with CA2/carbonic anhydrase 2 and CA4/carbonic anhydrase 4 which may regulate transporter activity. Isoform 1 but not isoform 2 interacts with AHCYL1 (via PEST domain when phosphorylated); the interaction increases SLC4A4 isoform 1 activity. Interacts with AHCYL2.</text>
</comment>
<comment type="subcellular location">
    <subcellularLocation>
        <location evidence="2 5">Basolateral cell membrane</location>
        <topology evidence="6">Multi-pass membrane protein</topology>
    </subcellularLocation>
    <subcellularLocation>
        <location evidence="10">Cell membrane</location>
        <topology evidence="6">Multi-pass membrane protein</topology>
    </subcellularLocation>
</comment>
<comment type="alternative products">
    <event type="alternative splicing"/>
    <isoform>
        <id>Q9XSZ4-1</id>
        <name>1</name>
        <sequence type="displayed"/>
    </isoform>
    <isoform>
        <id>Q9XSZ4-2</id>
        <name>2</name>
        <sequence type="described" ref="VSP_016715 VSP_016716"/>
    </isoform>
</comment>
<comment type="tissue specificity">
    <text evidence="8">Expressed in colonic mucosa, kidney cortex and to gastric mucosa.</text>
</comment>
<comment type="PTM">
    <text evidence="2 5">Phosphorylation of Ser-1026 by PKA increases the binding of CA2 and changes the Na(+):HCO3(-) stoichiometry of the transporter from 3:1 to 2:1. Phosphorylated in presence of STK39 and dephosphorylated in presence of PP1 phosphatase; phosphorylation seems to inhibit SLC4A4 activity.</text>
</comment>
<comment type="PTM">
    <text evidence="9">N-glycosylated. May not be necessary for the transporter basic functions.</text>
</comment>
<comment type="similarity">
    <text evidence="13">Belongs to the anion exchanger (TC 2.A.31) family.</text>
</comment>
<protein>
    <recommendedName>
        <fullName>Electrogenic sodium bicarbonate cotransporter 1</fullName>
        <shortName>Sodium bicarbonate cotransporter</shortName>
    </recommendedName>
    <alternativeName>
        <fullName>Na(+)/HCO3(-) cotransporter</fullName>
    </alternativeName>
    <alternativeName>
        <fullName>Solute carrier family 4 member 4</fullName>
    </alternativeName>
</protein>